<organism>
    <name type="scientific">Staphylococcus aureus (strain NCTC 8325 / PS 47)</name>
    <dbReference type="NCBI Taxonomy" id="93061"/>
    <lineage>
        <taxon>Bacteria</taxon>
        <taxon>Bacillati</taxon>
        <taxon>Bacillota</taxon>
        <taxon>Bacilli</taxon>
        <taxon>Bacillales</taxon>
        <taxon>Staphylococcaceae</taxon>
        <taxon>Staphylococcus</taxon>
    </lineage>
</organism>
<gene>
    <name evidence="1" type="primary">thyA</name>
    <name type="ordered locus">SAOUHSC_01435</name>
</gene>
<name>TYSY_STAA8</name>
<comment type="function">
    <text evidence="1">Catalyzes the reductive methylation of 2'-deoxyuridine-5'-monophosphate (dUMP) to 2'-deoxythymidine-5'-monophosphate (dTMP) while utilizing 5,10-methylenetetrahydrofolate (mTHF) as the methyl donor and reductant in the reaction, yielding dihydrofolate (DHF) as a by-product. This enzymatic reaction provides an intracellular de novo source of dTMP, an essential precursor for DNA biosynthesis.</text>
</comment>
<comment type="catalytic activity">
    <reaction evidence="1">
        <text>dUMP + (6R)-5,10-methylene-5,6,7,8-tetrahydrofolate = 7,8-dihydrofolate + dTMP</text>
        <dbReference type="Rhea" id="RHEA:12104"/>
        <dbReference type="ChEBI" id="CHEBI:15636"/>
        <dbReference type="ChEBI" id="CHEBI:57451"/>
        <dbReference type="ChEBI" id="CHEBI:63528"/>
        <dbReference type="ChEBI" id="CHEBI:246422"/>
        <dbReference type="EC" id="2.1.1.45"/>
    </reaction>
</comment>
<comment type="pathway">
    <text evidence="1">Pyrimidine metabolism; dTTP biosynthesis.</text>
</comment>
<comment type="subunit">
    <text evidence="1">Homodimer.</text>
</comment>
<comment type="subcellular location">
    <subcellularLocation>
        <location evidence="1">Cytoplasm</location>
    </subcellularLocation>
</comment>
<comment type="similarity">
    <text evidence="1">Belongs to the thymidylate synthase family. Bacterial-type ThyA subfamily.</text>
</comment>
<keyword id="KW-0963">Cytoplasm</keyword>
<keyword id="KW-0489">Methyltransferase</keyword>
<keyword id="KW-0545">Nucleotide biosynthesis</keyword>
<keyword id="KW-1185">Reference proteome</keyword>
<keyword id="KW-0808">Transferase</keyword>
<evidence type="ECO:0000255" key="1">
    <source>
        <dbReference type="HAMAP-Rule" id="MF_00008"/>
    </source>
</evidence>
<accession>Q2FYK5</accession>
<dbReference type="EC" id="2.1.1.45" evidence="1"/>
<dbReference type="EMBL" id="CP000253">
    <property type="protein sequence ID" value="ABD30527.1"/>
    <property type="molecule type" value="Genomic_DNA"/>
</dbReference>
<dbReference type="RefSeq" id="WP_000934885.1">
    <property type="nucleotide sequence ID" value="NZ_LS483365.1"/>
</dbReference>
<dbReference type="RefSeq" id="YP_499960.1">
    <property type="nucleotide sequence ID" value="NC_007795.1"/>
</dbReference>
<dbReference type="SMR" id="Q2FYK5"/>
<dbReference type="STRING" id="93061.SAOUHSC_01435"/>
<dbReference type="PaxDb" id="1280-SAXN108_1448"/>
<dbReference type="GeneID" id="3920216"/>
<dbReference type="KEGG" id="sao:SAOUHSC_01435"/>
<dbReference type="PATRIC" id="fig|93061.5.peg.1311"/>
<dbReference type="eggNOG" id="COG0207">
    <property type="taxonomic scope" value="Bacteria"/>
</dbReference>
<dbReference type="HOGENOM" id="CLU_021669_0_2_9"/>
<dbReference type="OrthoDB" id="9774633at2"/>
<dbReference type="UniPathway" id="UPA00575"/>
<dbReference type="PRO" id="PR:Q2FYK5"/>
<dbReference type="Proteomes" id="UP000008816">
    <property type="component" value="Chromosome"/>
</dbReference>
<dbReference type="GO" id="GO:0005829">
    <property type="term" value="C:cytosol"/>
    <property type="evidence" value="ECO:0000318"/>
    <property type="project" value="GO_Central"/>
</dbReference>
<dbReference type="GO" id="GO:0004799">
    <property type="term" value="F:thymidylate synthase activity"/>
    <property type="evidence" value="ECO:0000318"/>
    <property type="project" value="GO_Central"/>
</dbReference>
<dbReference type="GO" id="GO:0006231">
    <property type="term" value="P:dTMP biosynthetic process"/>
    <property type="evidence" value="ECO:0000318"/>
    <property type="project" value="GO_Central"/>
</dbReference>
<dbReference type="GO" id="GO:0006235">
    <property type="term" value="P:dTTP biosynthetic process"/>
    <property type="evidence" value="ECO:0007669"/>
    <property type="project" value="UniProtKB-UniRule"/>
</dbReference>
<dbReference type="GO" id="GO:0032259">
    <property type="term" value="P:methylation"/>
    <property type="evidence" value="ECO:0007669"/>
    <property type="project" value="UniProtKB-KW"/>
</dbReference>
<dbReference type="CDD" id="cd00351">
    <property type="entry name" value="TS_Pyrimidine_HMase"/>
    <property type="match status" value="1"/>
</dbReference>
<dbReference type="Gene3D" id="3.30.572.10">
    <property type="entry name" value="Thymidylate synthase/dCMP hydroxymethylase domain"/>
    <property type="match status" value="1"/>
</dbReference>
<dbReference type="HAMAP" id="MF_00008">
    <property type="entry name" value="Thymidy_synth_bact"/>
    <property type="match status" value="1"/>
</dbReference>
<dbReference type="InterPro" id="IPR045097">
    <property type="entry name" value="Thymidate_synth/dCMP_Mease"/>
</dbReference>
<dbReference type="InterPro" id="IPR023451">
    <property type="entry name" value="Thymidate_synth/dCMP_Mease_dom"/>
</dbReference>
<dbReference type="InterPro" id="IPR036926">
    <property type="entry name" value="Thymidate_synth/dCMP_Mease_sf"/>
</dbReference>
<dbReference type="InterPro" id="IPR000398">
    <property type="entry name" value="Thymidylate_synthase"/>
</dbReference>
<dbReference type="InterPro" id="IPR020940">
    <property type="entry name" value="Thymidylate_synthase_AS"/>
</dbReference>
<dbReference type="NCBIfam" id="NF002496">
    <property type="entry name" value="PRK01827.1-2"/>
    <property type="match status" value="1"/>
</dbReference>
<dbReference type="NCBIfam" id="TIGR03284">
    <property type="entry name" value="thym_sym"/>
    <property type="match status" value="1"/>
</dbReference>
<dbReference type="PANTHER" id="PTHR11548:SF9">
    <property type="entry name" value="THYMIDYLATE SYNTHASE"/>
    <property type="match status" value="1"/>
</dbReference>
<dbReference type="PANTHER" id="PTHR11548">
    <property type="entry name" value="THYMIDYLATE SYNTHASE 1"/>
    <property type="match status" value="1"/>
</dbReference>
<dbReference type="Pfam" id="PF00303">
    <property type="entry name" value="Thymidylat_synt"/>
    <property type="match status" value="1"/>
</dbReference>
<dbReference type="PRINTS" id="PR00108">
    <property type="entry name" value="THYMDSNTHASE"/>
</dbReference>
<dbReference type="SUPFAM" id="SSF55831">
    <property type="entry name" value="Thymidylate synthase/dCMP hydroxymethylase"/>
    <property type="match status" value="1"/>
</dbReference>
<dbReference type="PROSITE" id="PS00091">
    <property type="entry name" value="THYMIDYLATE_SYNTHASE"/>
    <property type="match status" value="1"/>
</dbReference>
<feature type="chain" id="PRO_1000000687" description="Thymidylate synthase">
    <location>
        <begin position="1"/>
        <end position="318"/>
    </location>
</feature>
<feature type="active site" description="Nucleophile" evidence="1">
    <location>
        <position position="201"/>
    </location>
</feature>
<feature type="binding site" description="in other chain" evidence="1">
    <location>
        <position position="26"/>
    </location>
    <ligand>
        <name>dUMP</name>
        <dbReference type="ChEBI" id="CHEBI:246422"/>
        <note>ligand shared between dimeric partners</note>
    </ligand>
</feature>
<feature type="binding site" evidence="1">
    <location>
        <begin position="181"/>
        <end position="182"/>
    </location>
    <ligand>
        <name>dUMP</name>
        <dbReference type="ChEBI" id="CHEBI:246422"/>
        <note>ligand shared between dimeric partners</note>
    </ligand>
</feature>
<feature type="binding site" description="in other chain" evidence="1">
    <location>
        <begin position="221"/>
        <end position="224"/>
    </location>
    <ligand>
        <name>dUMP</name>
        <dbReference type="ChEBI" id="CHEBI:246422"/>
        <note>ligand shared between dimeric partners</note>
    </ligand>
</feature>
<feature type="binding site" evidence="1">
    <location>
        <position position="224"/>
    </location>
    <ligand>
        <name>(6R)-5,10-methylene-5,6,7,8-tetrahydrofolate</name>
        <dbReference type="ChEBI" id="CHEBI:15636"/>
    </ligand>
</feature>
<feature type="binding site" description="in other chain" evidence="1">
    <location>
        <position position="232"/>
    </location>
    <ligand>
        <name>dUMP</name>
        <dbReference type="ChEBI" id="CHEBI:246422"/>
        <note>ligand shared between dimeric partners</note>
    </ligand>
</feature>
<feature type="binding site" description="in other chain" evidence="1">
    <location>
        <begin position="262"/>
        <end position="264"/>
    </location>
    <ligand>
        <name>dUMP</name>
        <dbReference type="ChEBI" id="CHEBI:246422"/>
        <note>ligand shared between dimeric partners</note>
    </ligand>
</feature>
<feature type="binding site" evidence="1">
    <location>
        <position position="317"/>
    </location>
    <ligand>
        <name>(6R)-5,10-methylene-5,6,7,8-tetrahydrofolate</name>
        <dbReference type="ChEBI" id="CHEBI:15636"/>
    </ligand>
</feature>
<protein>
    <recommendedName>
        <fullName evidence="1">Thymidylate synthase</fullName>
        <shortName evidence="1">TS</shortName>
        <shortName evidence="1">TSase</shortName>
        <ecNumber evidence="1">2.1.1.45</ecNumber>
    </recommendedName>
</protein>
<reference key="1">
    <citation type="book" date="2006" name="Gram positive pathogens, 2nd edition">
        <title>The Staphylococcus aureus NCTC 8325 genome.</title>
        <editorList>
            <person name="Fischetti V."/>
            <person name="Novick R."/>
            <person name="Ferretti J."/>
            <person name="Portnoy D."/>
            <person name="Rood J."/>
        </editorList>
        <authorList>
            <person name="Gillaspy A.F."/>
            <person name="Worrell V."/>
            <person name="Orvis J."/>
            <person name="Roe B.A."/>
            <person name="Dyer D.W."/>
            <person name="Iandolo J.J."/>
        </authorList>
    </citation>
    <scope>NUCLEOTIDE SEQUENCE [LARGE SCALE GENOMIC DNA]</scope>
    <source>
        <strain>NCTC 8325 / PS 47</strain>
    </source>
</reference>
<sequence length="318" mass="36839">MLNSFDAAYHSLCEEVLEIGNTRNDRTNTGTISKFGHQLRFDLSKGFPLLTTKKVSFKLVATELLWFIKGDTNIQYLLKYNNNIWNEWAFENYIKSDEYKGPDMTDFGHRALSDPEFNEQYKEQMKQFKQRILEDDTFAKQFGDLGNVYGKQWRDWVDKDGNHFDQLKTVIEQIKHNPDSRRHIVSAWNPTEIDTMALPPCHTMFQFYVQDGKLSCQLYQRSADIFLGVPFNIASYALLTHLIAKECGLEVGEFVHTFGDAHIYSNHIDAIQTQLARESFNPPTLKINSDKSIFDINYEDLEIVDYESHPAIKAPIAV</sequence>
<proteinExistence type="inferred from homology"/>